<protein>
    <recommendedName>
        <fullName>CDAN1-interacting nuclease 1</fullName>
    </recommendedName>
</protein>
<organism>
    <name type="scientific">Gallus gallus</name>
    <name type="common">Chicken</name>
    <dbReference type="NCBI Taxonomy" id="9031"/>
    <lineage>
        <taxon>Eukaryota</taxon>
        <taxon>Metazoa</taxon>
        <taxon>Chordata</taxon>
        <taxon>Craniata</taxon>
        <taxon>Vertebrata</taxon>
        <taxon>Euteleostomi</taxon>
        <taxon>Archelosauria</taxon>
        <taxon>Archosauria</taxon>
        <taxon>Dinosauria</taxon>
        <taxon>Saurischia</taxon>
        <taxon>Theropoda</taxon>
        <taxon>Coelurosauria</taxon>
        <taxon>Aves</taxon>
        <taxon>Neognathae</taxon>
        <taxon>Galloanserae</taxon>
        <taxon>Galliformes</taxon>
        <taxon>Phasianidae</taxon>
        <taxon>Phasianinae</taxon>
        <taxon>Gallus</taxon>
    </lineage>
</organism>
<name>CDIN1_CHICK</name>
<feature type="chain" id="PRO_0000271046" description="CDAN1-interacting nuclease 1">
    <location>
        <begin position="1"/>
        <end position="272"/>
    </location>
</feature>
<dbReference type="EMBL" id="AJ851424">
    <property type="protein sequence ID" value="CAH65058.1"/>
    <property type="molecule type" value="mRNA"/>
</dbReference>
<dbReference type="RefSeq" id="NP_001026371.1">
    <property type="nucleotide sequence ID" value="NM_001031200.2"/>
</dbReference>
<dbReference type="SMR" id="Q5F476"/>
<dbReference type="FunCoup" id="Q5F476">
    <property type="interactions" value="419"/>
</dbReference>
<dbReference type="STRING" id="9031.ENSGALP00000069573"/>
<dbReference type="PaxDb" id="9031-ENSGALP00000015925"/>
<dbReference type="Ensembl" id="ENSGALT00010012772.1">
    <property type="protein sequence ID" value="ENSGALP00010007336.1"/>
    <property type="gene ID" value="ENSGALG00010005372.1"/>
</dbReference>
<dbReference type="GeneID" id="423293"/>
<dbReference type="KEGG" id="gga:423293"/>
<dbReference type="CTD" id="84529"/>
<dbReference type="VEuPathDB" id="HostDB:geneid_423293"/>
<dbReference type="eggNOG" id="ENOG502R9SY">
    <property type="taxonomic scope" value="Eukaryota"/>
</dbReference>
<dbReference type="GeneTree" id="ENSGT00390000018465"/>
<dbReference type="InParanoid" id="Q5F476"/>
<dbReference type="OrthoDB" id="1272at2759"/>
<dbReference type="PhylomeDB" id="Q5F476"/>
<dbReference type="PRO" id="PR:Q5F476"/>
<dbReference type="Proteomes" id="UP000000539">
    <property type="component" value="Chromosome 5"/>
</dbReference>
<dbReference type="Bgee" id="ENSGALG00000009801">
    <property type="expression patterns" value="Expressed in kidney and 13 other cell types or tissues"/>
</dbReference>
<dbReference type="GO" id="GO:0005737">
    <property type="term" value="C:cytoplasm"/>
    <property type="evidence" value="ECO:0000250"/>
    <property type="project" value="UniProtKB"/>
</dbReference>
<dbReference type="GO" id="GO:0005634">
    <property type="term" value="C:nucleus"/>
    <property type="evidence" value="ECO:0000250"/>
    <property type="project" value="UniProtKB"/>
</dbReference>
<dbReference type="GO" id="GO:0030218">
    <property type="term" value="P:erythrocyte differentiation"/>
    <property type="evidence" value="ECO:0000318"/>
    <property type="project" value="GO_Central"/>
</dbReference>
<dbReference type="InterPro" id="IPR029404">
    <property type="entry name" value="CDIN1"/>
</dbReference>
<dbReference type="PANTHER" id="PTHR31661:SF1">
    <property type="entry name" value="CDAN1-INTERACTING NUCLEASE 1"/>
    <property type="match status" value="1"/>
</dbReference>
<dbReference type="PANTHER" id="PTHR31661">
    <property type="entry name" value="SIMILAR TO CDNA SEQUENCE BC052040"/>
    <property type="match status" value="1"/>
</dbReference>
<dbReference type="Pfam" id="PF14811">
    <property type="entry name" value="TPD"/>
    <property type="match status" value="1"/>
</dbReference>
<proteinExistence type="evidence at transcript level"/>
<keyword id="KW-0963">Cytoplasm</keyword>
<keyword id="KW-0539">Nucleus</keyword>
<keyword id="KW-1185">Reference proteome</keyword>
<accession>Q5F476</accession>
<sequence length="272" mass="31423">MKLTKAQYDEIAQFLGHVQPTRQSLRKLKEKFPSQSQSTLLSIFSQEYQKQIKRTHAKHHTAEAVETYYQRYLNGVMKNAAAPVLLELANEMDFAPSLMARIVLERFLQEQEQAIPSKTLINSMLRDPSQIPDGVLANQIYQCTVNDCCYGPLVDCIKHFINNRSCSLCVAEDQLRAKGYDKTPDFILEVPVAVEGHIIHWIESKASFGDESSHQAYLQDQFWSYWNRFGPGLVIYWYGFIEELDCHRERGILLKDCFPTDIVTLRHSMAQR</sequence>
<comment type="function">
    <text evidence="1">May play a role in erythroid cell differentiation.</text>
</comment>
<comment type="subcellular location">
    <subcellularLocation>
        <location evidence="1">Nucleus</location>
    </subcellularLocation>
    <subcellularLocation>
        <location evidence="1">Cytoplasm</location>
    </subcellularLocation>
    <text evidence="1">Mainly nuclear.</text>
</comment>
<reference key="1">
    <citation type="journal article" date="2005" name="Genome Biol.">
        <title>Full-length cDNAs from chicken bursal lymphocytes to facilitate gene function analysis.</title>
        <authorList>
            <person name="Caldwell R.B."/>
            <person name="Kierzek A.M."/>
            <person name="Arakawa H."/>
            <person name="Bezzubov Y."/>
            <person name="Zaim J."/>
            <person name="Fiedler P."/>
            <person name="Kutter S."/>
            <person name="Blagodatski A."/>
            <person name="Kostovska D."/>
            <person name="Koter M."/>
            <person name="Plachy J."/>
            <person name="Carninci P."/>
            <person name="Hayashizaki Y."/>
            <person name="Buerstedde J.-M."/>
        </authorList>
    </citation>
    <scope>NUCLEOTIDE SEQUENCE [LARGE SCALE MRNA]</scope>
    <source>
        <strain>CB</strain>
        <tissue>Bursa of Fabricius</tissue>
    </source>
</reference>
<evidence type="ECO:0000250" key="1">
    <source>
        <dbReference type="UniProtKB" id="Q9Y2V0"/>
    </source>
</evidence>
<gene>
    <name type="primary">CDIN1</name>
    <name type="ORF">RCJMB04_2g23</name>
</gene>